<feature type="chain" id="PRO_0000374687" description="Ribosomal protein uS12 methylthiotransferase RimO">
    <location>
        <begin position="1"/>
        <end position="443"/>
    </location>
</feature>
<feature type="domain" description="MTTase N-terminal" evidence="1">
    <location>
        <begin position="5"/>
        <end position="115"/>
    </location>
</feature>
<feature type="domain" description="Radical SAM core" evidence="2">
    <location>
        <begin position="133"/>
        <end position="374"/>
    </location>
</feature>
<feature type="domain" description="TRAM" evidence="1">
    <location>
        <begin position="377"/>
        <end position="443"/>
    </location>
</feature>
<feature type="binding site" evidence="1">
    <location>
        <position position="14"/>
    </location>
    <ligand>
        <name>[4Fe-4S] cluster</name>
        <dbReference type="ChEBI" id="CHEBI:49883"/>
        <label>1</label>
    </ligand>
</feature>
<feature type="binding site" evidence="1">
    <location>
        <position position="50"/>
    </location>
    <ligand>
        <name>[4Fe-4S] cluster</name>
        <dbReference type="ChEBI" id="CHEBI:49883"/>
        <label>1</label>
    </ligand>
</feature>
<feature type="binding site" evidence="1">
    <location>
        <position position="79"/>
    </location>
    <ligand>
        <name>[4Fe-4S] cluster</name>
        <dbReference type="ChEBI" id="CHEBI:49883"/>
        <label>1</label>
    </ligand>
</feature>
<feature type="binding site" evidence="1">
    <location>
        <position position="147"/>
    </location>
    <ligand>
        <name>[4Fe-4S] cluster</name>
        <dbReference type="ChEBI" id="CHEBI:49883"/>
        <label>2</label>
        <note>4Fe-4S-S-AdoMet</note>
    </ligand>
</feature>
<feature type="binding site" evidence="1">
    <location>
        <position position="151"/>
    </location>
    <ligand>
        <name>[4Fe-4S] cluster</name>
        <dbReference type="ChEBI" id="CHEBI:49883"/>
        <label>2</label>
        <note>4Fe-4S-S-AdoMet</note>
    </ligand>
</feature>
<feature type="binding site" evidence="1">
    <location>
        <position position="154"/>
    </location>
    <ligand>
        <name>[4Fe-4S] cluster</name>
        <dbReference type="ChEBI" id="CHEBI:49883"/>
        <label>2</label>
        <note>4Fe-4S-S-AdoMet</note>
    </ligand>
</feature>
<accession>B3H2N3</accession>
<gene>
    <name evidence="1" type="primary">rimO</name>
    <name type="ordered locus">APP7_1698</name>
</gene>
<evidence type="ECO:0000255" key="1">
    <source>
        <dbReference type="HAMAP-Rule" id="MF_01865"/>
    </source>
</evidence>
<evidence type="ECO:0000255" key="2">
    <source>
        <dbReference type="PROSITE-ProRule" id="PRU01266"/>
    </source>
</evidence>
<keyword id="KW-0004">4Fe-4S</keyword>
<keyword id="KW-0963">Cytoplasm</keyword>
<keyword id="KW-0408">Iron</keyword>
<keyword id="KW-0411">Iron-sulfur</keyword>
<keyword id="KW-0479">Metal-binding</keyword>
<keyword id="KW-0949">S-adenosyl-L-methionine</keyword>
<keyword id="KW-0808">Transferase</keyword>
<comment type="function">
    <text evidence="1">Catalyzes the methylthiolation of an aspartic acid residue of ribosomal protein uS12.</text>
</comment>
<comment type="catalytic activity">
    <reaction evidence="1">
        <text>L-aspartate(89)-[ribosomal protein uS12]-hydrogen + (sulfur carrier)-SH + AH2 + 2 S-adenosyl-L-methionine = 3-methylsulfanyl-L-aspartate(89)-[ribosomal protein uS12]-hydrogen + (sulfur carrier)-H + 5'-deoxyadenosine + L-methionine + A + S-adenosyl-L-homocysteine + 2 H(+)</text>
        <dbReference type="Rhea" id="RHEA:37087"/>
        <dbReference type="Rhea" id="RHEA-COMP:10460"/>
        <dbReference type="Rhea" id="RHEA-COMP:10461"/>
        <dbReference type="Rhea" id="RHEA-COMP:14737"/>
        <dbReference type="Rhea" id="RHEA-COMP:14739"/>
        <dbReference type="ChEBI" id="CHEBI:13193"/>
        <dbReference type="ChEBI" id="CHEBI:15378"/>
        <dbReference type="ChEBI" id="CHEBI:17319"/>
        <dbReference type="ChEBI" id="CHEBI:17499"/>
        <dbReference type="ChEBI" id="CHEBI:29917"/>
        <dbReference type="ChEBI" id="CHEBI:29961"/>
        <dbReference type="ChEBI" id="CHEBI:57844"/>
        <dbReference type="ChEBI" id="CHEBI:57856"/>
        <dbReference type="ChEBI" id="CHEBI:59789"/>
        <dbReference type="ChEBI" id="CHEBI:64428"/>
        <dbReference type="ChEBI" id="CHEBI:73599"/>
        <dbReference type="EC" id="2.8.4.4"/>
    </reaction>
</comment>
<comment type="cofactor">
    <cofactor evidence="1">
        <name>[4Fe-4S] cluster</name>
        <dbReference type="ChEBI" id="CHEBI:49883"/>
    </cofactor>
    <text evidence="1">Binds 2 [4Fe-4S] clusters. One cluster is coordinated with 3 cysteines and an exchangeable S-adenosyl-L-methionine.</text>
</comment>
<comment type="subcellular location">
    <subcellularLocation>
        <location evidence="1">Cytoplasm</location>
    </subcellularLocation>
</comment>
<comment type="similarity">
    <text evidence="1">Belongs to the methylthiotransferase family. RimO subfamily.</text>
</comment>
<proteinExistence type="inferred from homology"/>
<reference key="1">
    <citation type="submission" date="2008-06" db="EMBL/GenBank/DDBJ databases">
        <title>Genome and proteome analysis of A. pleuropneumoniae serotype 7.</title>
        <authorList>
            <person name="Linke B."/>
            <person name="Buettner F."/>
            <person name="Martinez-Arias R."/>
            <person name="Goesmann A."/>
            <person name="Baltes N."/>
            <person name="Tegetmeyer H."/>
            <person name="Singh M."/>
            <person name="Gerlach G.F."/>
        </authorList>
    </citation>
    <scope>NUCLEOTIDE SEQUENCE [LARGE SCALE GENOMIC DNA]</scope>
    <source>
        <strain>AP76</strain>
    </source>
</reference>
<sequence>MSTTPNIGFISLGCPKNLVDSERILTELRTDGYNIIPSYENADLVIVNTCGFIDSAVQESLEAIGEALEENGKVIVTGCLGAKENQIREVHPKVLEITGPHSYEAVMKHVHKYVPRPERNIYTSLVPAQGVKLTPKHYAYLKISEGCDHRCTFCIIPSMRGDLDSRPIVQVLDEAKRLADSGVKELLIVSQDTSAYALDQSKENQNKTVFWNGAPIKNNLITLCEQLGSLGIWVRLHYVYPYPHVDDLIPLMAQGKILPYLDIPLQHASPKVLKAMKRPGAIDRTLERIKKWREICPELTLRSTFIVGFPGETEEDFQMLLDFLEEAQLDRVGCFKFSPVEGAVATEMADQVSEDVKEERFHRFMQVQQRISAARLQQKVGKTLAVIIDEIDEEGIIGRSMADAPEIDGVVYVDNLSEQEVKVGQVISVSITNADEYDLWGTC</sequence>
<dbReference type="EC" id="2.8.4.4" evidence="1"/>
<dbReference type="EMBL" id="CP001091">
    <property type="protein sequence ID" value="ACE62350.1"/>
    <property type="molecule type" value="Genomic_DNA"/>
</dbReference>
<dbReference type="RefSeq" id="WP_005613226.1">
    <property type="nucleotide sequence ID" value="NC_010939.1"/>
</dbReference>
<dbReference type="SMR" id="B3H2N3"/>
<dbReference type="KEGG" id="apa:APP7_1698"/>
<dbReference type="HOGENOM" id="CLU_018697_0_0_6"/>
<dbReference type="Proteomes" id="UP000001226">
    <property type="component" value="Chromosome"/>
</dbReference>
<dbReference type="GO" id="GO:0005829">
    <property type="term" value="C:cytosol"/>
    <property type="evidence" value="ECO:0007669"/>
    <property type="project" value="TreeGrafter"/>
</dbReference>
<dbReference type="GO" id="GO:0051539">
    <property type="term" value="F:4 iron, 4 sulfur cluster binding"/>
    <property type="evidence" value="ECO:0007669"/>
    <property type="project" value="UniProtKB-UniRule"/>
</dbReference>
<dbReference type="GO" id="GO:0035599">
    <property type="term" value="F:aspartic acid methylthiotransferase activity"/>
    <property type="evidence" value="ECO:0007669"/>
    <property type="project" value="TreeGrafter"/>
</dbReference>
<dbReference type="GO" id="GO:0046872">
    <property type="term" value="F:metal ion binding"/>
    <property type="evidence" value="ECO:0007669"/>
    <property type="project" value="UniProtKB-KW"/>
</dbReference>
<dbReference type="GO" id="GO:0103039">
    <property type="term" value="F:protein methylthiotransferase activity"/>
    <property type="evidence" value="ECO:0007669"/>
    <property type="project" value="UniProtKB-EC"/>
</dbReference>
<dbReference type="GO" id="GO:0006400">
    <property type="term" value="P:tRNA modification"/>
    <property type="evidence" value="ECO:0007669"/>
    <property type="project" value="InterPro"/>
</dbReference>
<dbReference type="CDD" id="cd01335">
    <property type="entry name" value="Radical_SAM"/>
    <property type="match status" value="1"/>
</dbReference>
<dbReference type="FunFam" id="2.40.50.140:FF:000060">
    <property type="entry name" value="Ribosomal protein S12 methylthiotransferase RimO"/>
    <property type="match status" value="1"/>
</dbReference>
<dbReference type="FunFam" id="3.40.50.12160:FF:000002">
    <property type="entry name" value="Ribosomal protein S12 methylthiotransferase RimO"/>
    <property type="match status" value="1"/>
</dbReference>
<dbReference type="FunFam" id="3.80.30.20:FF:000001">
    <property type="entry name" value="tRNA-2-methylthio-N(6)-dimethylallyladenosine synthase 2"/>
    <property type="match status" value="1"/>
</dbReference>
<dbReference type="Gene3D" id="3.40.50.12160">
    <property type="entry name" value="Methylthiotransferase, N-terminal domain"/>
    <property type="match status" value="1"/>
</dbReference>
<dbReference type="Gene3D" id="2.40.50.140">
    <property type="entry name" value="Nucleic acid-binding proteins"/>
    <property type="match status" value="1"/>
</dbReference>
<dbReference type="Gene3D" id="3.80.30.20">
    <property type="entry name" value="tm_1862 like domain"/>
    <property type="match status" value="1"/>
</dbReference>
<dbReference type="HAMAP" id="MF_01865">
    <property type="entry name" value="MTTase_RimO"/>
    <property type="match status" value="1"/>
</dbReference>
<dbReference type="InterPro" id="IPR006638">
    <property type="entry name" value="Elp3/MiaA/NifB-like_rSAM"/>
</dbReference>
<dbReference type="InterPro" id="IPR005839">
    <property type="entry name" value="Methylthiotransferase"/>
</dbReference>
<dbReference type="InterPro" id="IPR020612">
    <property type="entry name" value="Methylthiotransferase_CS"/>
</dbReference>
<dbReference type="InterPro" id="IPR013848">
    <property type="entry name" value="Methylthiotransferase_N"/>
</dbReference>
<dbReference type="InterPro" id="IPR038135">
    <property type="entry name" value="Methylthiotransferase_N_sf"/>
</dbReference>
<dbReference type="InterPro" id="IPR012340">
    <property type="entry name" value="NA-bd_OB-fold"/>
</dbReference>
<dbReference type="InterPro" id="IPR005840">
    <property type="entry name" value="Ribosomal_uS12_MeSTrfase_RimO"/>
</dbReference>
<dbReference type="InterPro" id="IPR007197">
    <property type="entry name" value="rSAM"/>
</dbReference>
<dbReference type="InterPro" id="IPR023404">
    <property type="entry name" value="rSAM_horseshoe"/>
</dbReference>
<dbReference type="InterPro" id="IPR002792">
    <property type="entry name" value="TRAM_dom"/>
</dbReference>
<dbReference type="NCBIfam" id="TIGR01125">
    <property type="entry name" value="30S ribosomal protein S12 methylthiotransferase RimO"/>
    <property type="match status" value="1"/>
</dbReference>
<dbReference type="NCBIfam" id="TIGR00089">
    <property type="entry name" value="MiaB/RimO family radical SAM methylthiotransferase"/>
    <property type="match status" value="1"/>
</dbReference>
<dbReference type="PANTHER" id="PTHR43837">
    <property type="entry name" value="RIBOSOMAL PROTEIN S12 METHYLTHIOTRANSFERASE RIMO"/>
    <property type="match status" value="1"/>
</dbReference>
<dbReference type="PANTHER" id="PTHR43837:SF1">
    <property type="entry name" value="RIBOSOMAL PROTEIN US12 METHYLTHIOTRANSFERASE RIMO"/>
    <property type="match status" value="1"/>
</dbReference>
<dbReference type="Pfam" id="PF04055">
    <property type="entry name" value="Radical_SAM"/>
    <property type="match status" value="1"/>
</dbReference>
<dbReference type="Pfam" id="PF18693">
    <property type="entry name" value="TRAM_2"/>
    <property type="match status" value="1"/>
</dbReference>
<dbReference type="Pfam" id="PF00919">
    <property type="entry name" value="UPF0004"/>
    <property type="match status" value="1"/>
</dbReference>
<dbReference type="SFLD" id="SFLDG01082">
    <property type="entry name" value="B12-binding_domain_containing"/>
    <property type="match status" value="1"/>
</dbReference>
<dbReference type="SFLD" id="SFLDG01061">
    <property type="entry name" value="methylthiotransferase"/>
    <property type="match status" value="1"/>
</dbReference>
<dbReference type="SFLD" id="SFLDF00274">
    <property type="entry name" value="ribosomal_protein_S12_methylth"/>
    <property type="match status" value="1"/>
</dbReference>
<dbReference type="SMART" id="SM00729">
    <property type="entry name" value="Elp3"/>
    <property type="match status" value="1"/>
</dbReference>
<dbReference type="SUPFAM" id="SSF102114">
    <property type="entry name" value="Radical SAM enzymes"/>
    <property type="match status" value="1"/>
</dbReference>
<dbReference type="PROSITE" id="PS51449">
    <property type="entry name" value="MTTASE_N"/>
    <property type="match status" value="1"/>
</dbReference>
<dbReference type="PROSITE" id="PS01278">
    <property type="entry name" value="MTTASE_RADICAL"/>
    <property type="match status" value="1"/>
</dbReference>
<dbReference type="PROSITE" id="PS51918">
    <property type="entry name" value="RADICAL_SAM"/>
    <property type="match status" value="1"/>
</dbReference>
<dbReference type="PROSITE" id="PS50926">
    <property type="entry name" value="TRAM"/>
    <property type="match status" value="1"/>
</dbReference>
<organism>
    <name type="scientific">Actinobacillus pleuropneumoniae serotype 7 (strain AP76)</name>
    <dbReference type="NCBI Taxonomy" id="537457"/>
    <lineage>
        <taxon>Bacteria</taxon>
        <taxon>Pseudomonadati</taxon>
        <taxon>Pseudomonadota</taxon>
        <taxon>Gammaproteobacteria</taxon>
        <taxon>Pasteurellales</taxon>
        <taxon>Pasteurellaceae</taxon>
        <taxon>Actinobacillus</taxon>
    </lineage>
</organism>
<protein>
    <recommendedName>
        <fullName evidence="1">Ribosomal protein uS12 methylthiotransferase RimO</fullName>
        <shortName evidence="1">uS12 MTTase</shortName>
        <shortName evidence="1">uS12 methylthiotransferase</shortName>
        <ecNumber evidence="1">2.8.4.4</ecNumber>
    </recommendedName>
    <alternativeName>
        <fullName evidence="1">Ribosomal protein uS12 (aspartate-C(3))-methylthiotransferase</fullName>
    </alternativeName>
    <alternativeName>
        <fullName evidence="1">Ribosome maturation factor RimO</fullName>
    </alternativeName>
</protein>
<name>RIMO_ACTP7</name>